<evidence type="ECO:0000255" key="1">
    <source>
        <dbReference type="PROSITE-ProRule" id="PRU00303"/>
    </source>
</evidence>
<evidence type="ECO:0000255" key="2">
    <source>
        <dbReference type="PROSITE-ProRule" id="PRU01164"/>
    </source>
</evidence>
<evidence type="ECO:0000305" key="3"/>
<comment type="catalytic activity">
    <reaction>
        <text>Hydrolysis of terminal non-reducing N-acetyl-D-hexosamine residues in N-acetyl-beta-D-hexosaminides.</text>
        <dbReference type="EC" id="3.2.1.52"/>
    </reaction>
</comment>
<comment type="subcellular location">
    <subcellularLocation>
        <location evidence="3">Cell outer membrane</location>
        <topology evidence="3">Lipid-anchor</topology>
    </subcellularLocation>
</comment>
<comment type="similarity">
    <text evidence="3">Belongs to the glycosyl hydrolase 20 family.</text>
</comment>
<protein>
    <recommendedName>
        <fullName>Beta-hexosaminidase</fullName>
        <ecNumber>3.2.1.52</ecNumber>
    </recommendedName>
    <alternativeName>
        <fullName>Beta-GlcNAcase</fullName>
    </alternativeName>
    <alternativeName>
        <fullName>Beta-N-acetylhexosaminidase</fullName>
        <shortName>Beta-NAHase</shortName>
    </alternativeName>
    <alternativeName>
        <fullName>N-acetyl-beta-glucosaminidase</fullName>
    </alternativeName>
</protein>
<reference key="1">
    <citation type="journal article" date="1994" name="Microbiology">
        <title>Cloning and expression in Escherichia coli of the nahA gene from Porphyromonas gingivalis indicates that beta-N-acetylhexosaminidase is an outer-membrane-associated lipoprotein.</title>
        <authorList>
            <person name="Lovatt A."/>
            <person name="Roberts I.S."/>
        </authorList>
    </citation>
    <scope>NUCLEOTIDE SEQUENCE [GENOMIC DNA]</scope>
    <source>
        <strain>ATCC BAA-308 / W83</strain>
    </source>
</reference>
<reference key="2">
    <citation type="journal article" date="2003" name="J. Bacteriol.">
        <title>Complete genome sequence of the oral pathogenic bacterium Porphyromonas gingivalis strain W83.</title>
        <authorList>
            <person name="Nelson K.E."/>
            <person name="Fleischmann R.D."/>
            <person name="DeBoy R.T."/>
            <person name="Paulsen I.T."/>
            <person name="Fouts D.E."/>
            <person name="Eisen J.A."/>
            <person name="Daugherty S.C."/>
            <person name="Dodson R.J."/>
            <person name="Durkin A.S."/>
            <person name="Gwinn M.L."/>
            <person name="Haft D.H."/>
            <person name="Kolonay J.F."/>
            <person name="Nelson W.C."/>
            <person name="Mason T.M."/>
            <person name="Tallon L."/>
            <person name="Gray J."/>
            <person name="Granger D."/>
            <person name="Tettelin H."/>
            <person name="Dong H."/>
            <person name="Galvin J.L."/>
            <person name="Duncan M.J."/>
            <person name="Dewhirst F.E."/>
            <person name="Fraser C.M."/>
        </authorList>
    </citation>
    <scope>NUCLEOTIDE SEQUENCE [LARGE SCALE GENOMIC DNA]</scope>
    <source>
        <strain>ATCC BAA-308 / W83</strain>
    </source>
</reference>
<sequence length="777" mass="87661">MKRLTFGACICCLLSLMACSQKAKQVQIPEYDKGINIIPLPMQLTESDDSFEVDDKTTICVSAEELKPIAKLLADKLRASADLSLQIEIGEEPSGNAIYIGVDTALPLKEEGYMLRSDKRGVSIIGKSAHGAFYGMQTLLQLLPAEVESSNEVLLPMTVPGVEIKDEPAFGYRGFMLDVCRHFLSVEDIKKHIDIMAMFKINRFHWHLTEDQAWRIEIKKYPRLTEVGSTRTEGDGTQYSGFYTQEQVRDIVQYASDRFITVIPEIEMPGHAMAALAAYPQLACFPREFKPRIIWGVEQDVYCAGKDSVFRFISDVIDEVAPLFPGTYFHIGGDECPKDRWKACSLCQKRMRDNGLKDEHELQSYFIKQAEKVLQKHGKRLIGWDEILEGGLAPSATVMSWRGEDGGIAAANMNHDVIMTPGSGGLYLDHYQGDPTVEPVAIGGYAPLEQVYAYNPLPKELPADKHRYVLGAQANLWAEYLYTSERYDYQAYPRLLAVAELTWTPLAKKDFADFCRRLDNACVRLDMHGINYHIPLPEQPGGSSDFIAFTDKAKLTFTTSRPMKMVYTLDETEPTLTSTPYTVPLEFAQTGLLKIRTVTAGGKMSPVRRIRVEKQPFNMSMEVPAPKPGLTIRTAYGDLYDVPDLQQVASWEVGTVSSLEEIMHGKEKITSPEVLERRVVEATGYVLIPEDGVYEFSTENNEFWIDNVKLIDNVGEVKKFSRRNSSRALQKGYHPIKTIWVGAIQGGWPTYWNYSRVMIRLKGEEKFKPISSDMLFQ</sequence>
<keyword id="KW-0998">Cell outer membrane</keyword>
<keyword id="KW-0326">Glycosidase</keyword>
<keyword id="KW-0378">Hydrolase</keyword>
<keyword id="KW-0449">Lipoprotein</keyword>
<keyword id="KW-0472">Membrane</keyword>
<keyword id="KW-0564">Palmitate</keyword>
<keyword id="KW-1185">Reference proteome</keyword>
<keyword id="KW-0732">Signal</keyword>
<feature type="signal peptide" evidence="1">
    <location>
        <begin position="1"/>
        <end position="18"/>
    </location>
</feature>
<feature type="chain" id="PRO_0000012016" description="Beta-hexosaminidase">
    <location>
        <begin position="19"/>
        <end position="777"/>
    </location>
</feature>
<feature type="domain" description="PA14" evidence="2">
    <location>
        <begin position="625"/>
        <end position="766"/>
    </location>
</feature>
<feature type="lipid moiety-binding region" description="N-palmitoyl cysteine" evidence="3">
    <location>
        <position position="19"/>
    </location>
</feature>
<feature type="lipid moiety-binding region" description="S-diacylglycerol cysteine" evidence="3">
    <location>
        <position position="19"/>
    </location>
</feature>
<feature type="sequence conflict" description="In Ref. 1; CAA55582." evidence="3" ref="1">
    <original>R</original>
    <variation>H</variation>
    <location>
        <position position="258"/>
    </location>
</feature>
<feature type="sequence conflict" description="In Ref. 1; CAA55582." evidence="3" ref="1">
    <original>E</original>
    <variation>M</variation>
    <location>
        <position position="265"/>
    </location>
</feature>
<feature type="sequence conflict" description="In Ref. 1; CAA55582." evidence="3" ref="1">
    <original>LA</original>
    <variation>FR</variation>
    <location>
        <begin position="282"/>
        <end position="283"/>
    </location>
</feature>
<feature type="sequence conflict" description="In Ref. 1; CAA55582." evidence="3" ref="1">
    <original>T</original>
    <variation>S</variation>
    <location>
        <position position="575"/>
    </location>
</feature>
<feature type="sequence conflict" description="In Ref. 1; CAA55582." evidence="3" ref="1">
    <original>G</original>
    <variation>A</variation>
    <location>
        <position position="747"/>
    </location>
</feature>
<organism>
    <name type="scientific">Porphyromonas gingivalis (strain ATCC BAA-308 / W83)</name>
    <dbReference type="NCBI Taxonomy" id="242619"/>
    <lineage>
        <taxon>Bacteria</taxon>
        <taxon>Pseudomonadati</taxon>
        <taxon>Bacteroidota</taxon>
        <taxon>Bacteroidia</taxon>
        <taxon>Bacteroidales</taxon>
        <taxon>Porphyromonadaceae</taxon>
        <taxon>Porphyromonas</taxon>
    </lineage>
</organism>
<proteinExistence type="inferred from homology"/>
<accession>P49008</accession>
<name>HEXA_PORGI</name>
<gene>
    <name type="primary">nahA</name>
    <name type="ordered locus">PG_0043</name>
</gene>
<dbReference type="EC" id="3.2.1.52"/>
<dbReference type="EMBL" id="X78979">
    <property type="protein sequence ID" value="CAA55582.1"/>
    <property type="molecule type" value="Genomic_DNA"/>
</dbReference>
<dbReference type="EMBL" id="AE015924">
    <property type="protein sequence ID" value="AAQ65295.1"/>
    <property type="molecule type" value="Genomic_DNA"/>
</dbReference>
<dbReference type="RefSeq" id="WP_005873538.1">
    <property type="nucleotide sequence ID" value="NC_002950.2"/>
</dbReference>
<dbReference type="SMR" id="P49008"/>
<dbReference type="STRING" id="242619.PG_0043"/>
<dbReference type="CAZy" id="GH20">
    <property type="family name" value="Glycoside Hydrolase Family 20"/>
</dbReference>
<dbReference type="EnsemblBacteria" id="AAQ65295">
    <property type="protein sequence ID" value="AAQ65295"/>
    <property type="gene ID" value="PG_0043"/>
</dbReference>
<dbReference type="KEGG" id="pgi:PG_0043"/>
<dbReference type="PATRIC" id="fig|242619.8.peg.39"/>
<dbReference type="eggNOG" id="COG3525">
    <property type="taxonomic scope" value="Bacteria"/>
</dbReference>
<dbReference type="HOGENOM" id="CLU_007082_5_0_10"/>
<dbReference type="BioCyc" id="PGIN242619:G1G02-39-MONOMER"/>
<dbReference type="Proteomes" id="UP000000588">
    <property type="component" value="Chromosome"/>
</dbReference>
<dbReference type="GO" id="GO:0009279">
    <property type="term" value="C:cell outer membrane"/>
    <property type="evidence" value="ECO:0007669"/>
    <property type="project" value="UniProtKB-SubCell"/>
</dbReference>
<dbReference type="GO" id="GO:0004563">
    <property type="term" value="F:beta-N-acetylhexosaminidase activity"/>
    <property type="evidence" value="ECO:0007669"/>
    <property type="project" value="UniProtKB-EC"/>
</dbReference>
<dbReference type="GO" id="GO:0005975">
    <property type="term" value="P:carbohydrate metabolic process"/>
    <property type="evidence" value="ECO:0007669"/>
    <property type="project" value="InterPro"/>
</dbReference>
<dbReference type="GO" id="GO:0030203">
    <property type="term" value="P:glycosaminoglycan metabolic process"/>
    <property type="evidence" value="ECO:0007669"/>
    <property type="project" value="TreeGrafter"/>
</dbReference>
<dbReference type="CDD" id="cd06563">
    <property type="entry name" value="GH20_chitobiase-like"/>
    <property type="match status" value="1"/>
</dbReference>
<dbReference type="Gene3D" id="3.30.379.10">
    <property type="entry name" value="Chitobiase/beta-hexosaminidase domain 2-like"/>
    <property type="match status" value="1"/>
</dbReference>
<dbReference type="Gene3D" id="3.20.20.80">
    <property type="entry name" value="Glycosidases"/>
    <property type="match status" value="1"/>
</dbReference>
<dbReference type="InterPro" id="IPR025705">
    <property type="entry name" value="Beta_hexosaminidase_sua/sub"/>
</dbReference>
<dbReference type="InterPro" id="IPR015883">
    <property type="entry name" value="Glyco_hydro_20_cat"/>
</dbReference>
<dbReference type="InterPro" id="IPR017853">
    <property type="entry name" value="Glycoside_hydrolase_SF"/>
</dbReference>
<dbReference type="InterPro" id="IPR029018">
    <property type="entry name" value="Hex-like_dom2"/>
</dbReference>
<dbReference type="InterPro" id="IPR015882">
    <property type="entry name" value="HEX_bac_N"/>
</dbReference>
<dbReference type="InterPro" id="IPR037524">
    <property type="entry name" value="PA14/GLEYA"/>
</dbReference>
<dbReference type="InterPro" id="IPR011658">
    <property type="entry name" value="PA14_dom"/>
</dbReference>
<dbReference type="PANTHER" id="PTHR22600">
    <property type="entry name" value="BETA-HEXOSAMINIDASE"/>
    <property type="match status" value="1"/>
</dbReference>
<dbReference type="PANTHER" id="PTHR22600:SF57">
    <property type="entry name" value="BETA-N-ACETYLHEXOSAMINIDASE"/>
    <property type="match status" value="1"/>
</dbReference>
<dbReference type="Pfam" id="PF13290">
    <property type="entry name" value="CHB_HEX_C_1"/>
    <property type="match status" value="1"/>
</dbReference>
<dbReference type="Pfam" id="PF00728">
    <property type="entry name" value="Glyco_hydro_20"/>
    <property type="match status" value="1"/>
</dbReference>
<dbReference type="Pfam" id="PF02838">
    <property type="entry name" value="Glyco_hydro_20b"/>
    <property type="match status" value="1"/>
</dbReference>
<dbReference type="Pfam" id="PF07691">
    <property type="entry name" value="PA14"/>
    <property type="match status" value="1"/>
</dbReference>
<dbReference type="PRINTS" id="PR00738">
    <property type="entry name" value="GLHYDRLASE20"/>
</dbReference>
<dbReference type="SMART" id="SM00758">
    <property type="entry name" value="PA14"/>
    <property type="match status" value="1"/>
</dbReference>
<dbReference type="SUPFAM" id="SSF51445">
    <property type="entry name" value="(Trans)glycosidases"/>
    <property type="match status" value="1"/>
</dbReference>
<dbReference type="SUPFAM" id="SSF55545">
    <property type="entry name" value="beta-N-acetylhexosaminidase-like domain"/>
    <property type="match status" value="1"/>
</dbReference>
<dbReference type="PROSITE" id="PS51820">
    <property type="entry name" value="PA14"/>
    <property type="match status" value="1"/>
</dbReference>
<dbReference type="PROSITE" id="PS51257">
    <property type="entry name" value="PROKAR_LIPOPROTEIN"/>
    <property type="match status" value="1"/>
</dbReference>